<geneLocation type="chloroplast"/>
<reference key="1">
    <citation type="submission" date="2007-03" db="EMBL/GenBank/DDBJ databases">
        <title>Sequencing analysis of Nasturtium officinale chloroplast DNA.</title>
        <authorList>
            <person name="Hosouchi T."/>
            <person name="Tsuruoka H."/>
            <person name="Kotani H."/>
        </authorList>
    </citation>
    <scope>NUCLEOTIDE SEQUENCE [LARGE SCALE GENOMIC DNA]</scope>
</reference>
<comment type="subunit">
    <text evidence="1">Part of the 30S ribosomal subunit.</text>
</comment>
<comment type="subcellular location">
    <subcellularLocation>
        <location>Plastid</location>
        <location>Chloroplast</location>
    </subcellularLocation>
</comment>
<comment type="similarity">
    <text evidence="2">Belongs to the universal ribosomal protein uS15 family.</text>
</comment>
<proteinExistence type="inferred from homology"/>
<name>RR15_NASOF</name>
<sequence>MIKNAFISFQEQKEESRGSVEFQVFSFTNKIRRLTSHLELHRKDYLSQRGLRKILGKRQRLLAYLSKKNRGRYKELINQLNIRELKTR</sequence>
<gene>
    <name type="primary">rps15</name>
</gene>
<accession>A4QLZ2</accession>
<dbReference type="EMBL" id="AP009376">
    <property type="protein sequence ID" value="BAF50697.1"/>
    <property type="molecule type" value="Genomic_DNA"/>
</dbReference>
<dbReference type="RefSeq" id="YP_001123872.1">
    <property type="nucleotide sequence ID" value="NC_009275.1"/>
</dbReference>
<dbReference type="SMR" id="A4QLZ2"/>
<dbReference type="GeneID" id="4962153"/>
<dbReference type="GO" id="GO:0009507">
    <property type="term" value="C:chloroplast"/>
    <property type="evidence" value="ECO:0007669"/>
    <property type="project" value="UniProtKB-SubCell"/>
</dbReference>
<dbReference type="GO" id="GO:1990904">
    <property type="term" value="C:ribonucleoprotein complex"/>
    <property type="evidence" value="ECO:0007669"/>
    <property type="project" value="UniProtKB-KW"/>
</dbReference>
<dbReference type="GO" id="GO:0005840">
    <property type="term" value="C:ribosome"/>
    <property type="evidence" value="ECO:0007669"/>
    <property type="project" value="UniProtKB-KW"/>
</dbReference>
<dbReference type="GO" id="GO:0003735">
    <property type="term" value="F:structural constituent of ribosome"/>
    <property type="evidence" value="ECO:0007669"/>
    <property type="project" value="InterPro"/>
</dbReference>
<dbReference type="GO" id="GO:0006412">
    <property type="term" value="P:translation"/>
    <property type="evidence" value="ECO:0007669"/>
    <property type="project" value="UniProtKB-UniRule"/>
</dbReference>
<dbReference type="CDD" id="cd00353">
    <property type="entry name" value="Ribosomal_S15p_S13e"/>
    <property type="match status" value="1"/>
</dbReference>
<dbReference type="FunFam" id="1.10.287.10:FF:000011">
    <property type="entry name" value="30S ribosomal protein S15, chloroplastic"/>
    <property type="match status" value="1"/>
</dbReference>
<dbReference type="Gene3D" id="1.10.287.10">
    <property type="entry name" value="S15/NS1, RNA-binding"/>
    <property type="match status" value="1"/>
</dbReference>
<dbReference type="HAMAP" id="MF_01343_B">
    <property type="entry name" value="Ribosomal_uS15_B"/>
    <property type="match status" value="1"/>
</dbReference>
<dbReference type="InterPro" id="IPR000589">
    <property type="entry name" value="Ribosomal_uS15"/>
</dbReference>
<dbReference type="InterPro" id="IPR005290">
    <property type="entry name" value="Ribosomal_uS15_bac-type"/>
</dbReference>
<dbReference type="InterPro" id="IPR009068">
    <property type="entry name" value="uS15_NS1_RNA-bd_sf"/>
</dbReference>
<dbReference type="NCBIfam" id="TIGR00952">
    <property type="entry name" value="S15_bact"/>
    <property type="match status" value="1"/>
</dbReference>
<dbReference type="PANTHER" id="PTHR23321">
    <property type="entry name" value="RIBOSOMAL PROTEIN S15, BACTERIAL AND ORGANELLAR"/>
    <property type="match status" value="1"/>
</dbReference>
<dbReference type="PANTHER" id="PTHR23321:SF26">
    <property type="entry name" value="SMALL RIBOSOMAL SUBUNIT PROTEIN US15M"/>
    <property type="match status" value="1"/>
</dbReference>
<dbReference type="Pfam" id="PF00312">
    <property type="entry name" value="Ribosomal_S15"/>
    <property type="match status" value="1"/>
</dbReference>
<dbReference type="SMART" id="SM01387">
    <property type="entry name" value="Ribosomal_S15"/>
    <property type="match status" value="1"/>
</dbReference>
<dbReference type="SUPFAM" id="SSF47060">
    <property type="entry name" value="S15/NS1 RNA-binding domain"/>
    <property type="match status" value="1"/>
</dbReference>
<dbReference type="PROSITE" id="PS00362">
    <property type="entry name" value="RIBOSOMAL_S15"/>
    <property type="match status" value="1"/>
</dbReference>
<keyword id="KW-0150">Chloroplast</keyword>
<keyword id="KW-0934">Plastid</keyword>
<keyword id="KW-0687">Ribonucleoprotein</keyword>
<keyword id="KW-0689">Ribosomal protein</keyword>
<feature type="chain" id="PRO_0000354269" description="Small ribosomal subunit protein uS15c">
    <location>
        <begin position="1"/>
        <end position="88"/>
    </location>
</feature>
<organism>
    <name type="scientific">Nasturtium officinale</name>
    <name type="common">Watercress</name>
    <name type="synonym">Rorippa nasturtium-aquaticum</name>
    <dbReference type="NCBI Taxonomy" id="65948"/>
    <lineage>
        <taxon>Eukaryota</taxon>
        <taxon>Viridiplantae</taxon>
        <taxon>Streptophyta</taxon>
        <taxon>Embryophyta</taxon>
        <taxon>Tracheophyta</taxon>
        <taxon>Spermatophyta</taxon>
        <taxon>Magnoliopsida</taxon>
        <taxon>eudicotyledons</taxon>
        <taxon>Gunneridae</taxon>
        <taxon>Pentapetalae</taxon>
        <taxon>rosids</taxon>
        <taxon>malvids</taxon>
        <taxon>Brassicales</taxon>
        <taxon>Brassicaceae</taxon>
        <taxon>Cardamineae</taxon>
        <taxon>Nasturtium</taxon>
    </lineage>
</organism>
<evidence type="ECO:0000250" key="1"/>
<evidence type="ECO:0000305" key="2"/>
<protein>
    <recommendedName>
        <fullName evidence="2">Small ribosomal subunit protein uS15c</fullName>
    </recommendedName>
    <alternativeName>
        <fullName>30S ribosomal protein S15, chloroplastic</fullName>
    </alternativeName>
</protein>